<evidence type="ECO:0000250" key="1">
    <source>
        <dbReference type="UniProtKB" id="Q9BSJ6"/>
    </source>
</evidence>
<evidence type="ECO:0000256" key="2">
    <source>
        <dbReference type="SAM" id="MobiDB-lite"/>
    </source>
</evidence>
<evidence type="ECO:0000269" key="3">
    <source>
    </source>
</evidence>
<evidence type="ECO:0000303" key="4">
    <source>
    </source>
</evidence>
<evidence type="ECO:0000303" key="5">
    <source>
    </source>
</evidence>
<evidence type="ECO:0000305" key="6"/>
<evidence type="ECO:0000312" key="7">
    <source>
        <dbReference type="MGI" id="MGI:1924434"/>
    </source>
</evidence>
<evidence type="ECO:0007744" key="8">
    <source>
    </source>
</evidence>
<comment type="function">
    <text evidence="1">During mitosis, may play a role in the metaphase-to-anaphase transition.</text>
</comment>
<comment type="subunit">
    <text evidence="1">Interacts with PICALM; this interaction may target PICALM to the nucleus. During mitosis, associates with HDAC2 and MTA2 subunits of the chromatin-remodeling NuRD complex; this association is strongest at prometaphase and decreases as the cell progresses through metaphase and anaphase.</text>
</comment>
<comment type="subcellular location">
    <subcellularLocation>
        <location evidence="1">Nucleus</location>
    </subcellularLocation>
    <subcellularLocation>
        <location evidence="1">Nucleus</location>
        <location evidence="1">Nucleolus</location>
    </subcellularLocation>
    <text evidence="1">Partially localizes to the nucleolus.</text>
</comment>
<comment type="alternative products">
    <event type="alternative splicing"/>
    <isoform>
        <id>Q8BFY7-1</id>
        <name>1</name>
        <sequence type="displayed"/>
    </isoform>
    <isoform>
        <id>Q8BFY7-2</id>
        <name>2</name>
        <sequence type="described" ref="VSP_023998"/>
    </isoform>
</comment>
<comment type="tissue specificity">
    <text evidence="3">Mainly expressed in thymus and ovary. Expressed in all T-cell subpopulations isolated from the thymus, macrophages, pro-erythrocytes, granulocytes, mast cells and progenitor cells.</text>
</comment>
<comment type="developmental stage">
    <text evidence="3">Widely expressed at 9.5 dpc, including high levels in the neural tube, somites, the posterior region of the midbrain, olfactory placode and the branchial arches. At 10.5 dpc, reduction of the widespread expression and stronger expression in the neural tube, branchial arches, developing limbs, telencephalon, nasal process, lense vesicle, anterior and posterior regions of the mid- and hindbrain. From 11.5 dpc on, strongly expressed in the genital tubercle and hair and vibrissae follicles. From 12.5 dpc onwards, expression decreases, with a complete lack of expression in the cephalic region and the neural tube at 14.5 dpc. Strongly expressed during limb development, with higher levels in hindlimbs compared to forelimbs and expression slightly more marked in the posterior region of the limb buds. At 11.5 and 12.5 dpc, detected at the distal domain and the underlying mesenchyme, but not in the apical ectodermal ridge. Distally, becomes confined to the digits at 13.5 and 14.5 dpc.</text>
</comment>
<comment type="domain">
    <text evidence="1">The N-terminal destruction box 2 (D-box 2) is required for APC/C ubiquitination and proteasomal degradation.</text>
</comment>
<comment type="PTM">
    <text evidence="1">Ubiquitinated by the anaphase-promoting complex/cyclosome (APC/C) complex in the presence of FZR1, leading to its degradation by the proteasome during mitotic exit. However, degradation is not essential for normal mitotic progression within a single cell cycle (By similarity).</text>
</comment>
<feature type="chain" id="PRO_0000281160" description="Protein PIMREG">
    <location>
        <begin position="1"/>
        <end position="231"/>
    </location>
</feature>
<feature type="region of interest" description="Disordered" evidence="2">
    <location>
        <begin position="1"/>
        <end position="44"/>
    </location>
</feature>
<feature type="region of interest" description="Disordered" evidence="2">
    <location>
        <begin position="115"/>
        <end position="138"/>
    </location>
</feature>
<feature type="region of interest" description="Disordered" evidence="2">
    <location>
        <begin position="152"/>
        <end position="197"/>
    </location>
</feature>
<feature type="short sequence motif" description="D-box 1">
    <location>
        <begin position="14"/>
        <end position="17"/>
    </location>
</feature>
<feature type="short sequence motif" description="D-box 2">
    <location>
        <begin position="53"/>
        <end position="56"/>
    </location>
</feature>
<feature type="compositionally biased region" description="Basic and acidic residues" evidence="2">
    <location>
        <begin position="17"/>
        <end position="29"/>
    </location>
</feature>
<feature type="compositionally biased region" description="Polar residues" evidence="2">
    <location>
        <begin position="178"/>
        <end position="190"/>
    </location>
</feature>
<feature type="modified residue" description="Phosphoserine" evidence="1">
    <location>
        <position position="11"/>
    </location>
</feature>
<feature type="modified residue" description="Phosphoserine" evidence="1">
    <location>
        <position position="16"/>
    </location>
</feature>
<feature type="modified residue" description="Phosphoserine" evidence="8">
    <location>
        <position position="72"/>
    </location>
</feature>
<feature type="modified residue" description="Phosphoserine; by Uhmk1; in vitro" evidence="1">
    <location>
        <position position="128"/>
    </location>
</feature>
<feature type="modified residue" description="Phosphoserine" evidence="1">
    <location>
        <position position="191"/>
    </location>
</feature>
<feature type="modified residue" description="Phosphoserine" evidence="1">
    <location>
        <position position="193"/>
    </location>
</feature>
<feature type="splice variant" id="VSP_023998" description="In isoform 2." evidence="4 5">
    <location>
        <begin position="81"/>
        <end position="82"/>
    </location>
</feature>
<feature type="sequence conflict" description="In Ref. 3; AAH29115." evidence="6" ref="3">
    <original>A</original>
    <variation>T</variation>
    <location>
        <position position="163"/>
    </location>
</feature>
<feature type="sequence conflict" description="In Ref. 3; AAH29115." evidence="6" ref="3">
    <original>S</original>
    <variation>A</variation>
    <location>
        <position position="173"/>
    </location>
</feature>
<protein>
    <recommendedName>
        <fullName evidence="6">Protein PIMREG</fullName>
    </recommendedName>
    <alternativeName>
        <fullName>CALM-interactor expressed in thymus and spleen homolog</fullName>
    </alternativeName>
    <alternativeName>
        <fullName evidence="1">PICALM-interacting mitotic regulator</fullName>
    </alternativeName>
    <alternativeName>
        <fullName>Regulator of chromosome segregation protein 1</fullName>
    </alternativeName>
</protein>
<reference key="1">
    <citation type="journal article" date="2005" name="Science">
        <title>The transcriptional landscape of the mammalian genome.</title>
        <authorList>
            <person name="Carninci P."/>
            <person name="Kasukawa T."/>
            <person name="Katayama S."/>
            <person name="Gough J."/>
            <person name="Frith M.C."/>
            <person name="Maeda N."/>
            <person name="Oyama R."/>
            <person name="Ravasi T."/>
            <person name="Lenhard B."/>
            <person name="Wells C."/>
            <person name="Kodzius R."/>
            <person name="Shimokawa K."/>
            <person name="Bajic V.B."/>
            <person name="Brenner S.E."/>
            <person name="Batalov S."/>
            <person name="Forrest A.R."/>
            <person name="Zavolan M."/>
            <person name="Davis M.J."/>
            <person name="Wilming L.G."/>
            <person name="Aidinis V."/>
            <person name="Allen J.E."/>
            <person name="Ambesi-Impiombato A."/>
            <person name="Apweiler R."/>
            <person name="Aturaliya R.N."/>
            <person name="Bailey T.L."/>
            <person name="Bansal M."/>
            <person name="Baxter L."/>
            <person name="Beisel K.W."/>
            <person name="Bersano T."/>
            <person name="Bono H."/>
            <person name="Chalk A.M."/>
            <person name="Chiu K.P."/>
            <person name="Choudhary V."/>
            <person name="Christoffels A."/>
            <person name="Clutterbuck D.R."/>
            <person name="Crowe M.L."/>
            <person name="Dalla E."/>
            <person name="Dalrymple B.P."/>
            <person name="de Bono B."/>
            <person name="Della Gatta G."/>
            <person name="di Bernardo D."/>
            <person name="Down T."/>
            <person name="Engstrom P."/>
            <person name="Fagiolini M."/>
            <person name="Faulkner G."/>
            <person name="Fletcher C.F."/>
            <person name="Fukushima T."/>
            <person name="Furuno M."/>
            <person name="Futaki S."/>
            <person name="Gariboldi M."/>
            <person name="Georgii-Hemming P."/>
            <person name="Gingeras T.R."/>
            <person name="Gojobori T."/>
            <person name="Green R.E."/>
            <person name="Gustincich S."/>
            <person name="Harbers M."/>
            <person name="Hayashi Y."/>
            <person name="Hensch T.K."/>
            <person name="Hirokawa N."/>
            <person name="Hill D."/>
            <person name="Huminiecki L."/>
            <person name="Iacono M."/>
            <person name="Ikeo K."/>
            <person name="Iwama A."/>
            <person name="Ishikawa T."/>
            <person name="Jakt M."/>
            <person name="Kanapin A."/>
            <person name="Katoh M."/>
            <person name="Kawasawa Y."/>
            <person name="Kelso J."/>
            <person name="Kitamura H."/>
            <person name="Kitano H."/>
            <person name="Kollias G."/>
            <person name="Krishnan S.P."/>
            <person name="Kruger A."/>
            <person name="Kummerfeld S.K."/>
            <person name="Kurochkin I.V."/>
            <person name="Lareau L.F."/>
            <person name="Lazarevic D."/>
            <person name="Lipovich L."/>
            <person name="Liu J."/>
            <person name="Liuni S."/>
            <person name="McWilliam S."/>
            <person name="Madan Babu M."/>
            <person name="Madera M."/>
            <person name="Marchionni L."/>
            <person name="Matsuda H."/>
            <person name="Matsuzawa S."/>
            <person name="Miki H."/>
            <person name="Mignone F."/>
            <person name="Miyake S."/>
            <person name="Morris K."/>
            <person name="Mottagui-Tabar S."/>
            <person name="Mulder N."/>
            <person name="Nakano N."/>
            <person name="Nakauchi H."/>
            <person name="Ng P."/>
            <person name="Nilsson R."/>
            <person name="Nishiguchi S."/>
            <person name="Nishikawa S."/>
            <person name="Nori F."/>
            <person name="Ohara O."/>
            <person name="Okazaki Y."/>
            <person name="Orlando V."/>
            <person name="Pang K.C."/>
            <person name="Pavan W.J."/>
            <person name="Pavesi G."/>
            <person name="Pesole G."/>
            <person name="Petrovsky N."/>
            <person name="Piazza S."/>
            <person name="Reed J."/>
            <person name="Reid J.F."/>
            <person name="Ring B.Z."/>
            <person name="Ringwald M."/>
            <person name="Rost B."/>
            <person name="Ruan Y."/>
            <person name="Salzberg S.L."/>
            <person name="Sandelin A."/>
            <person name="Schneider C."/>
            <person name="Schoenbach C."/>
            <person name="Sekiguchi K."/>
            <person name="Semple C.A."/>
            <person name="Seno S."/>
            <person name="Sessa L."/>
            <person name="Sheng Y."/>
            <person name="Shibata Y."/>
            <person name="Shimada H."/>
            <person name="Shimada K."/>
            <person name="Silva D."/>
            <person name="Sinclair B."/>
            <person name="Sperling S."/>
            <person name="Stupka E."/>
            <person name="Sugiura K."/>
            <person name="Sultana R."/>
            <person name="Takenaka Y."/>
            <person name="Taki K."/>
            <person name="Tammoja K."/>
            <person name="Tan S.L."/>
            <person name="Tang S."/>
            <person name="Taylor M.S."/>
            <person name="Tegner J."/>
            <person name="Teichmann S.A."/>
            <person name="Ueda H.R."/>
            <person name="van Nimwegen E."/>
            <person name="Verardo R."/>
            <person name="Wei C.L."/>
            <person name="Yagi K."/>
            <person name="Yamanishi H."/>
            <person name="Zabarovsky E."/>
            <person name="Zhu S."/>
            <person name="Zimmer A."/>
            <person name="Hide W."/>
            <person name="Bult C."/>
            <person name="Grimmond S.M."/>
            <person name="Teasdale R.D."/>
            <person name="Liu E.T."/>
            <person name="Brusic V."/>
            <person name="Quackenbush J."/>
            <person name="Wahlestedt C."/>
            <person name="Mattick J.S."/>
            <person name="Hume D.A."/>
            <person name="Kai C."/>
            <person name="Sasaki D."/>
            <person name="Tomaru Y."/>
            <person name="Fukuda S."/>
            <person name="Kanamori-Katayama M."/>
            <person name="Suzuki M."/>
            <person name="Aoki J."/>
            <person name="Arakawa T."/>
            <person name="Iida J."/>
            <person name="Imamura K."/>
            <person name="Itoh M."/>
            <person name="Kato T."/>
            <person name="Kawaji H."/>
            <person name="Kawagashira N."/>
            <person name="Kawashima T."/>
            <person name="Kojima M."/>
            <person name="Kondo S."/>
            <person name="Konno H."/>
            <person name="Nakano K."/>
            <person name="Ninomiya N."/>
            <person name="Nishio T."/>
            <person name="Okada M."/>
            <person name="Plessy C."/>
            <person name="Shibata K."/>
            <person name="Shiraki T."/>
            <person name="Suzuki S."/>
            <person name="Tagami M."/>
            <person name="Waki K."/>
            <person name="Watahiki A."/>
            <person name="Okamura-Oho Y."/>
            <person name="Suzuki H."/>
            <person name="Kawai J."/>
            <person name="Hayashizaki Y."/>
        </authorList>
    </citation>
    <scope>NUCLEOTIDE SEQUENCE [LARGE SCALE MRNA] (ISOFORMS 1 AND 2)</scope>
    <source>
        <strain>C57BL/6J</strain>
        <tissue>Spinal cord</tissue>
        <tissue>Wolffian duct</tissue>
    </source>
</reference>
<reference key="2">
    <citation type="journal article" date="2009" name="PLoS Biol.">
        <title>Lineage-specific biology revealed by a finished genome assembly of the mouse.</title>
        <authorList>
            <person name="Church D.M."/>
            <person name="Goodstadt L."/>
            <person name="Hillier L.W."/>
            <person name="Zody M.C."/>
            <person name="Goldstein S."/>
            <person name="She X."/>
            <person name="Bult C.J."/>
            <person name="Agarwala R."/>
            <person name="Cherry J.L."/>
            <person name="DiCuccio M."/>
            <person name="Hlavina W."/>
            <person name="Kapustin Y."/>
            <person name="Meric P."/>
            <person name="Maglott D."/>
            <person name="Birtle Z."/>
            <person name="Marques A.C."/>
            <person name="Graves T."/>
            <person name="Zhou S."/>
            <person name="Teague B."/>
            <person name="Potamousis K."/>
            <person name="Churas C."/>
            <person name="Place M."/>
            <person name="Herschleb J."/>
            <person name="Runnheim R."/>
            <person name="Forrest D."/>
            <person name="Amos-Landgraf J."/>
            <person name="Schwartz D.C."/>
            <person name="Cheng Z."/>
            <person name="Lindblad-Toh K."/>
            <person name="Eichler E.E."/>
            <person name="Ponting C.P."/>
        </authorList>
    </citation>
    <scope>NUCLEOTIDE SEQUENCE [LARGE SCALE GENOMIC DNA]</scope>
    <source>
        <strain>C57BL/6J</strain>
    </source>
</reference>
<reference key="3">
    <citation type="journal article" date="2004" name="Genome Res.">
        <title>The status, quality, and expansion of the NIH full-length cDNA project: the Mammalian Gene Collection (MGC).</title>
        <authorList>
            <consortium name="The MGC Project Team"/>
        </authorList>
    </citation>
    <scope>NUCLEOTIDE SEQUENCE [LARGE SCALE MRNA] (ISOFORM 2)</scope>
    <source>
        <strain>Czech II</strain>
        <tissue>Mammary tumor</tissue>
    </source>
</reference>
<reference key="4">
    <citation type="journal article" date="2008" name="Mol. Oncol.">
        <title>The CALM and CALM/AF10 interactor CATS is a marker for proliferation.</title>
        <authorList>
            <person name="Archangelo L.F."/>
            <person name="Greif P.A."/>
            <person name="Hoelzel M."/>
            <person name="Harasim T."/>
            <person name="Kremmer E."/>
            <person name="Przemeck G.K."/>
            <person name="Eick D."/>
            <person name="Deshpande A.J."/>
            <person name="Buske C."/>
            <person name="de Angelis M.H."/>
            <person name="Saad S.T."/>
            <person name="Bohlander S.K."/>
        </authorList>
    </citation>
    <scope>TISSUE SPECIFICITY</scope>
    <scope>DEVELOPMENTAL STAGE</scope>
</reference>
<reference key="5">
    <citation type="journal article" date="2009" name="Immunity">
        <title>The phagosomal proteome in interferon-gamma-activated macrophages.</title>
        <authorList>
            <person name="Trost M."/>
            <person name="English L."/>
            <person name="Lemieux S."/>
            <person name="Courcelles M."/>
            <person name="Desjardins M."/>
            <person name="Thibault P."/>
        </authorList>
    </citation>
    <scope>PHOSPHORYLATION [LARGE SCALE ANALYSIS] AT SER-72</scope>
    <scope>IDENTIFICATION BY MASS SPECTROMETRY [LARGE SCALE ANALYSIS]</scope>
</reference>
<accession>Q8BFY7</accession>
<accession>Q8K2Z7</accession>
<gene>
    <name evidence="1" type="primary">Pimreg</name>
    <name type="synonym">Cats</name>
    <name evidence="7" type="synonym">Fam64a</name>
    <name type="synonym">Rcs1</name>
</gene>
<dbReference type="EMBL" id="AK049710">
    <property type="protein sequence ID" value="BAC33887.1"/>
    <property type="molecule type" value="mRNA"/>
</dbReference>
<dbReference type="EMBL" id="AK078429">
    <property type="protein sequence ID" value="BAC37270.1"/>
    <property type="molecule type" value="mRNA"/>
</dbReference>
<dbReference type="EMBL" id="BX119911">
    <property type="status" value="NOT_ANNOTATED_CDS"/>
    <property type="molecule type" value="Genomic_DNA"/>
</dbReference>
<dbReference type="EMBL" id="BC029115">
    <property type="protein sequence ID" value="AAH29115.1"/>
    <property type="molecule type" value="mRNA"/>
</dbReference>
<dbReference type="CCDS" id="CCDS48840.1">
    <molecule id="Q8BFY7-1"/>
</dbReference>
<dbReference type="RefSeq" id="NP_001405087.1">
    <molecule id="Q8BFY7-1"/>
    <property type="nucleotide sequence ID" value="NM_001418158.1"/>
</dbReference>
<dbReference type="RefSeq" id="NP_001405088.1">
    <molecule id="Q8BFY7-1"/>
    <property type="nucleotide sequence ID" value="NM_001418159.1"/>
</dbReference>
<dbReference type="RefSeq" id="NP_653109.2">
    <molecule id="Q8BFY7-1"/>
    <property type="nucleotide sequence ID" value="NM_144526.3"/>
</dbReference>
<dbReference type="RefSeq" id="XP_006532039.1">
    <property type="nucleotide sequence ID" value="XM_006531976.2"/>
</dbReference>
<dbReference type="SMR" id="Q8BFY7"/>
<dbReference type="BioGRID" id="224601">
    <property type="interactions" value="1"/>
</dbReference>
<dbReference type="FunCoup" id="Q8BFY7">
    <property type="interactions" value="741"/>
</dbReference>
<dbReference type="STRING" id="10090.ENSMUSP00000021164"/>
<dbReference type="iPTMnet" id="Q8BFY7"/>
<dbReference type="PhosphoSitePlus" id="Q8BFY7"/>
<dbReference type="jPOST" id="Q8BFY7"/>
<dbReference type="PaxDb" id="10090-ENSMUSP00000021164"/>
<dbReference type="PeptideAtlas" id="Q8BFY7"/>
<dbReference type="ProteomicsDB" id="289425">
    <molecule id="Q8BFY7-1"/>
</dbReference>
<dbReference type="ProteomicsDB" id="289426">
    <molecule id="Q8BFY7-2"/>
</dbReference>
<dbReference type="Pumba" id="Q8BFY7"/>
<dbReference type="Antibodypedia" id="42756">
    <property type="antibodies" value="74 antibodies from 16 providers"/>
</dbReference>
<dbReference type="DNASU" id="109212"/>
<dbReference type="Ensembl" id="ENSMUST00000021164.4">
    <molecule id="Q8BFY7-1"/>
    <property type="protein sequence ID" value="ENSMUSP00000021164.4"/>
    <property type="gene ID" value="ENSMUSG00000020808.4"/>
</dbReference>
<dbReference type="GeneID" id="109212"/>
<dbReference type="KEGG" id="mmu:109212"/>
<dbReference type="UCSC" id="uc007jxz.1">
    <molecule id="Q8BFY7-1"/>
    <property type="organism name" value="mouse"/>
</dbReference>
<dbReference type="AGR" id="MGI:1924434"/>
<dbReference type="CTD" id="54478"/>
<dbReference type="MGI" id="MGI:1924434">
    <property type="gene designation" value="Pimreg"/>
</dbReference>
<dbReference type="VEuPathDB" id="HostDB:ENSMUSG00000020808"/>
<dbReference type="eggNOG" id="ENOG502S0SN">
    <property type="taxonomic scope" value="Eukaryota"/>
</dbReference>
<dbReference type="GeneTree" id="ENSGT00390000008128"/>
<dbReference type="HOGENOM" id="CLU_1209428_0_0_1"/>
<dbReference type="InParanoid" id="Q8BFY7"/>
<dbReference type="OMA" id="SNYYYLM"/>
<dbReference type="OrthoDB" id="9898669at2759"/>
<dbReference type="PhylomeDB" id="Q8BFY7"/>
<dbReference type="TreeFam" id="TF336322"/>
<dbReference type="BioGRID-ORCS" id="109212">
    <property type="hits" value="4 hits in 78 CRISPR screens"/>
</dbReference>
<dbReference type="ChiTaRS" id="Ctss">
    <property type="organism name" value="mouse"/>
</dbReference>
<dbReference type="PRO" id="PR:Q8BFY7"/>
<dbReference type="Proteomes" id="UP000000589">
    <property type="component" value="Chromosome 11"/>
</dbReference>
<dbReference type="RNAct" id="Q8BFY7">
    <property type="molecule type" value="protein"/>
</dbReference>
<dbReference type="Bgee" id="ENSMUSG00000020808">
    <property type="expression patterns" value="Expressed in ventricular zone and 132 other cell types or tissues"/>
</dbReference>
<dbReference type="ExpressionAtlas" id="Q8BFY7">
    <property type="expression patterns" value="baseline and differential"/>
</dbReference>
<dbReference type="GO" id="GO:0005730">
    <property type="term" value="C:nucleolus"/>
    <property type="evidence" value="ECO:0007669"/>
    <property type="project" value="UniProtKB-SubCell"/>
</dbReference>
<dbReference type="GO" id="GO:0005654">
    <property type="term" value="C:nucleoplasm"/>
    <property type="evidence" value="ECO:0007669"/>
    <property type="project" value="Ensembl"/>
</dbReference>
<dbReference type="GO" id="GO:0051301">
    <property type="term" value="P:cell division"/>
    <property type="evidence" value="ECO:0007669"/>
    <property type="project" value="UniProtKB-KW"/>
</dbReference>
<dbReference type="InterPro" id="IPR009932">
    <property type="entry name" value="RCS1"/>
</dbReference>
<dbReference type="PANTHER" id="PTHR35819">
    <property type="entry name" value="PICALM INTERACTING MITOTIC REGULATOR PIMREG"/>
    <property type="match status" value="1"/>
</dbReference>
<dbReference type="PANTHER" id="PTHR35819:SF1">
    <property type="entry name" value="PROTEIN PIMREG"/>
    <property type="match status" value="1"/>
</dbReference>
<dbReference type="Pfam" id="PF07326">
    <property type="entry name" value="RCS1"/>
    <property type="match status" value="1"/>
</dbReference>
<keyword id="KW-0025">Alternative splicing</keyword>
<keyword id="KW-0131">Cell cycle</keyword>
<keyword id="KW-0132">Cell division</keyword>
<keyword id="KW-0498">Mitosis</keyword>
<keyword id="KW-0539">Nucleus</keyword>
<keyword id="KW-0597">Phosphoprotein</keyword>
<keyword id="KW-1185">Reference proteome</keyword>
<keyword id="KW-0677">Repeat</keyword>
<keyword id="KW-0832">Ubl conjugation</keyword>
<sequence length="231" mass="25686">MASQWQGMRTSVRRRSLLKEEQLEKKEVTRSAGGHPETGPLGSLCRQFQRRLPLRAVSLNLGNGPSWKRLESPEPEQQGLQAAARSAKSALGAMSQRIQESCQSGTKWLMETQVKVRRKRGAQKDRGSPPPSLSQKNTRLCRANRDARVGGHLRLSGQMGPHAHRRQRLRRESALRSPCSSTEPLCSPSESDSDLEPVGAGIQHLQKLSQRLDRAIKAEESGDMTVSLIRE</sequence>
<organism>
    <name type="scientific">Mus musculus</name>
    <name type="common">Mouse</name>
    <dbReference type="NCBI Taxonomy" id="10090"/>
    <lineage>
        <taxon>Eukaryota</taxon>
        <taxon>Metazoa</taxon>
        <taxon>Chordata</taxon>
        <taxon>Craniata</taxon>
        <taxon>Vertebrata</taxon>
        <taxon>Euteleostomi</taxon>
        <taxon>Mammalia</taxon>
        <taxon>Eutheria</taxon>
        <taxon>Euarchontoglires</taxon>
        <taxon>Glires</taxon>
        <taxon>Rodentia</taxon>
        <taxon>Myomorpha</taxon>
        <taxon>Muroidea</taxon>
        <taxon>Muridae</taxon>
        <taxon>Murinae</taxon>
        <taxon>Mus</taxon>
        <taxon>Mus</taxon>
    </lineage>
</organism>
<name>PIMRE_MOUSE</name>
<proteinExistence type="evidence at protein level"/>